<name>GREA_CHRFK</name>
<evidence type="ECO:0000255" key="1">
    <source>
        <dbReference type="HAMAP-Rule" id="MF_00105"/>
    </source>
</evidence>
<evidence type="ECO:0000256" key="2">
    <source>
        <dbReference type="SAM" id="MobiDB-lite"/>
    </source>
</evidence>
<comment type="function">
    <text evidence="1">Necessary for efficient RNA polymerase transcription elongation past template-encoded arresting sites. The arresting sites in DNA have the property of trapping a certain fraction of elongating RNA polymerases that pass through, resulting in locked ternary complexes. Cleavage of the nascent transcript by cleavage factors such as GreA or GreB allows the resumption of elongation from the new 3'terminus. GreA releases sequences of 2 to 3 nucleotides.</text>
</comment>
<comment type="similarity">
    <text evidence="1">Belongs to the GreA/GreB family.</text>
</comment>
<feature type="chain" id="PRO_1000034263" description="Transcription elongation factor GreA">
    <location>
        <begin position="1"/>
        <end position="158"/>
    </location>
</feature>
<feature type="region of interest" description="Disordered" evidence="2">
    <location>
        <begin position="24"/>
        <end position="47"/>
    </location>
</feature>
<feature type="coiled-coil region" evidence="1">
    <location>
        <begin position="48"/>
        <end position="68"/>
    </location>
</feature>
<feature type="compositionally biased region" description="Basic and acidic residues" evidence="2">
    <location>
        <begin position="24"/>
        <end position="43"/>
    </location>
</feature>
<protein>
    <recommendedName>
        <fullName evidence="1">Transcription elongation factor GreA</fullName>
    </recommendedName>
    <alternativeName>
        <fullName evidence="1">Transcript cleavage factor GreA</fullName>
    </alternativeName>
</protein>
<accession>A0M5U7</accession>
<proteinExistence type="inferred from homology"/>
<organism>
    <name type="scientific">Christiangramia forsetii (strain DSM 17595 / CGMCC 1.15422 / KT0803)</name>
    <name type="common">Gramella forsetii</name>
    <dbReference type="NCBI Taxonomy" id="411154"/>
    <lineage>
        <taxon>Bacteria</taxon>
        <taxon>Pseudomonadati</taxon>
        <taxon>Bacteroidota</taxon>
        <taxon>Flavobacteriia</taxon>
        <taxon>Flavobacteriales</taxon>
        <taxon>Flavobacteriaceae</taxon>
        <taxon>Christiangramia</taxon>
    </lineage>
</organism>
<sequence>MSKVSYYTPEGLKKLRDELNHLKDVERPKASEAIGEARDKGDLSENAEYDAAKEAQGLLEMKISKMEEVVANARVIDESQLDTSKVLVHSHVKIKNQTNGAEMTYKLVAQSEADLKSGKISVDSPIGKGLLGKKVGDTAEIEVPNGTVKFDVIEIWRE</sequence>
<keyword id="KW-0175">Coiled coil</keyword>
<keyword id="KW-0238">DNA-binding</keyword>
<keyword id="KW-0804">Transcription</keyword>
<keyword id="KW-0805">Transcription regulation</keyword>
<gene>
    <name evidence="1" type="primary">greA</name>
    <name type="ordered locus">GFO_3048</name>
</gene>
<reference key="1">
    <citation type="journal article" date="2006" name="Environ. Microbiol.">
        <title>Whole genome analysis of the marine Bacteroidetes'Gramella forsetii' reveals adaptations to degradation of polymeric organic matter.</title>
        <authorList>
            <person name="Bauer M."/>
            <person name="Kube M."/>
            <person name="Teeling H."/>
            <person name="Richter M."/>
            <person name="Lombardot T."/>
            <person name="Allers E."/>
            <person name="Wuerdemann C.A."/>
            <person name="Quast C."/>
            <person name="Kuhl H."/>
            <person name="Knaust F."/>
            <person name="Woebken D."/>
            <person name="Bischof K."/>
            <person name="Mussmann M."/>
            <person name="Choudhuri J.V."/>
            <person name="Meyer F."/>
            <person name="Reinhardt R."/>
            <person name="Amann R.I."/>
            <person name="Gloeckner F.O."/>
        </authorList>
    </citation>
    <scope>NUCLEOTIDE SEQUENCE [LARGE SCALE GENOMIC DNA]</scope>
    <source>
        <strain>DSM 17595 / CGMCC 1.15422 / KT0803</strain>
    </source>
</reference>
<dbReference type="EMBL" id="CU207366">
    <property type="protein sequence ID" value="CAL67992.1"/>
    <property type="molecule type" value="Genomic_DNA"/>
</dbReference>
<dbReference type="RefSeq" id="WP_011710893.1">
    <property type="nucleotide sequence ID" value="NC_008571.1"/>
</dbReference>
<dbReference type="SMR" id="A0M5U7"/>
<dbReference type="STRING" id="411154.GFO_3048"/>
<dbReference type="KEGG" id="gfo:GFO_3048"/>
<dbReference type="eggNOG" id="COG0782">
    <property type="taxonomic scope" value="Bacteria"/>
</dbReference>
<dbReference type="HOGENOM" id="CLU_101379_2_0_10"/>
<dbReference type="OrthoDB" id="9808774at2"/>
<dbReference type="Proteomes" id="UP000000755">
    <property type="component" value="Chromosome"/>
</dbReference>
<dbReference type="GO" id="GO:0003677">
    <property type="term" value="F:DNA binding"/>
    <property type="evidence" value="ECO:0007669"/>
    <property type="project" value="UniProtKB-UniRule"/>
</dbReference>
<dbReference type="GO" id="GO:0070063">
    <property type="term" value="F:RNA polymerase binding"/>
    <property type="evidence" value="ECO:0007669"/>
    <property type="project" value="InterPro"/>
</dbReference>
<dbReference type="GO" id="GO:0006354">
    <property type="term" value="P:DNA-templated transcription elongation"/>
    <property type="evidence" value="ECO:0007669"/>
    <property type="project" value="TreeGrafter"/>
</dbReference>
<dbReference type="GO" id="GO:0032784">
    <property type="term" value="P:regulation of DNA-templated transcription elongation"/>
    <property type="evidence" value="ECO:0007669"/>
    <property type="project" value="UniProtKB-UniRule"/>
</dbReference>
<dbReference type="FunFam" id="1.10.287.180:FF:000001">
    <property type="entry name" value="Transcription elongation factor GreA"/>
    <property type="match status" value="1"/>
</dbReference>
<dbReference type="FunFam" id="3.10.50.30:FF:000001">
    <property type="entry name" value="Transcription elongation factor GreA"/>
    <property type="match status" value="1"/>
</dbReference>
<dbReference type="Gene3D" id="3.10.50.30">
    <property type="entry name" value="Transcription elongation factor, GreA/GreB, C-terminal domain"/>
    <property type="match status" value="1"/>
</dbReference>
<dbReference type="Gene3D" id="1.10.287.180">
    <property type="entry name" value="Transcription elongation factor, GreA/GreB, N-terminal domain"/>
    <property type="match status" value="1"/>
</dbReference>
<dbReference type="HAMAP" id="MF_00105">
    <property type="entry name" value="GreA_GreB"/>
    <property type="match status" value="1"/>
</dbReference>
<dbReference type="InterPro" id="IPR036953">
    <property type="entry name" value="GreA/GreB_C_sf"/>
</dbReference>
<dbReference type="InterPro" id="IPR018151">
    <property type="entry name" value="TF_GreA/GreB_CS"/>
</dbReference>
<dbReference type="InterPro" id="IPR006359">
    <property type="entry name" value="Tscrpt_elong_fac_GreA"/>
</dbReference>
<dbReference type="InterPro" id="IPR028624">
    <property type="entry name" value="Tscrpt_elong_fac_GreA/B"/>
</dbReference>
<dbReference type="InterPro" id="IPR001437">
    <property type="entry name" value="Tscrpt_elong_fac_GreA/B_C"/>
</dbReference>
<dbReference type="InterPro" id="IPR023459">
    <property type="entry name" value="Tscrpt_elong_fac_GreA/B_fam"/>
</dbReference>
<dbReference type="InterPro" id="IPR022691">
    <property type="entry name" value="Tscrpt_elong_fac_GreA/B_N"/>
</dbReference>
<dbReference type="InterPro" id="IPR036805">
    <property type="entry name" value="Tscrpt_elong_fac_GreA/B_N_sf"/>
</dbReference>
<dbReference type="NCBIfam" id="TIGR01462">
    <property type="entry name" value="greA"/>
    <property type="match status" value="1"/>
</dbReference>
<dbReference type="NCBIfam" id="NF001261">
    <property type="entry name" value="PRK00226.1-2"/>
    <property type="match status" value="1"/>
</dbReference>
<dbReference type="NCBIfam" id="NF001263">
    <property type="entry name" value="PRK00226.1-4"/>
    <property type="match status" value="1"/>
</dbReference>
<dbReference type="PANTHER" id="PTHR30437">
    <property type="entry name" value="TRANSCRIPTION ELONGATION FACTOR GREA"/>
    <property type="match status" value="1"/>
</dbReference>
<dbReference type="PANTHER" id="PTHR30437:SF4">
    <property type="entry name" value="TRANSCRIPTION ELONGATION FACTOR GREA"/>
    <property type="match status" value="1"/>
</dbReference>
<dbReference type="Pfam" id="PF01272">
    <property type="entry name" value="GreA_GreB"/>
    <property type="match status" value="1"/>
</dbReference>
<dbReference type="Pfam" id="PF03449">
    <property type="entry name" value="GreA_GreB_N"/>
    <property type="match status" value="1"/>
</dbReference>
<dbReference type="PIRSF" id="PIRSF006092">
    <property type="entry name" value="GreA_GreB"/>
    <property type="match status" value="1"/>
</dbReference>
<dbReference type="SUPFAM" id="SSF54534">
    <property type="entry name" value="FKBP-like"/>
    <property type="match status" value="1"/>
</dbReference>
<dbReference type="SUPFAM" id="SSF46557">
    <property type="entry name" value="GreA transcript cleavage protein, N-terminal domain"/>
    <property type="match status" value="1"/>
</dbReference>
<dbReference type="PROSITE" id="PS00830">
    <property type="entry name" value="GREAB_2"/>
    <property type="match status" value="1"/>
</dbReference>